<evidence type="ECO:0000255" key="1">
    <source>
        <dbReference type="HAMAP-Rule" id="MF_00375"/>
    </source>
</evidence>
<accession>Q1RG34</accession>
<name>GSA_ECOUT</name>
<proteinExistence type="inferred from homology"/>
<keyword id="KW-0963">Cytoplasm</keyword>
<keyword id="KW-0413">Isomerase</keyword>
<keyword id="KW-0627">Porphyrin biosynthesis</keyword>
<keyword id="KW-0663">Pyridoxal phosphate</keyword>
<comment type="catalytic activity">
    <reaction evidence="1">
        <text>(S)-4-amino-5-oxopentanoate = 5-aminolevulinate</text>
        <dbReference type="Rhea" id="RHEA:14265"/>
        <dbReference type="ChEBI" id="CHEBI:57501"/>
        <dbReference type="ChEBI" id="CHEBI:356416"/>
        <dbReference type="EC" id="5.4.3.8"/>
    </reaction>
</comment>
<comment type="cofactor">
    <cofactor evidence="1">
        <name>pyridoxal 5'-phosphate</name>
        <dbReference type="ChEBI" id="CHEBI:597326"/>
    </cofactor>
</comment>
<comment type="pathway">
    <text evidence="1">Porphyrin-containing compound metabolism; protoporphyrin-IX biosynthesis; 5-aminolevulinate from L-glutamyl-tRNA(Glu): step 2/2.</text>
</comment>
<comment type="subunit">
    <text evidence="1">Homodimer.</text>
</comment>
<comment type="subcellular location">
    <subcellularLocation>
        <location evidence="1">Cytoplasm</location>
    </subcellularLocation>
</comment>
<comment type="similarity">
    <text evidence="1">Belongs to the class-III pyridoxal-phosphate-dependent aminotransferase family. HemL subfamily.</text>
</comment>
<reference key="1">
    <citation type="journal article" date="2006" name="Proc. Natl. Acad. Sci. U.S.A.">
        <title>Identification of genes subject to positive selection in uropathogenic strains of Escherichia coli: a comparative genomics approach.</title>
        <authorList>
            <person name="Chen S.L."/>
            <person name="Hung C.-S."/>
            <person name="Xu J."/>
            <person name="Reigstad C.S."/>
            <person name="Magrini V."/>
            <person name="Sabo A."/>
            <person name="Blasiar D."/>
            <person name="Bieri T."/>
            <person name="Meyer R.R."/>
            <person name="Ozersky P."/>
            <person name="Armstrong J.R."/>
            <person name="Fulton R.S."/>
            <person name="Latreille J.P."/>
            <person name="Spieth J."/>
            <person name="Hooton T.M."/>
            <person name="Mardis E.R."/>
            <person name="Hultgren S.J."/>
            <person name="Gordon J.I."/>
        </authorList>
    </citation>
    <scope>NUCLEOTIDE SEQUENCE [LARGE SCALE GENOMIC DNA]</scope>
    <source>
        <strain>UTI89 / UPEC</strain>
    </source>
</reference>
<feature type="chain" id="PRO_0000300907" description="Glutamate-1-semialdehyde 2,1-aminomutase">
    <location>
        <begin position="1"/>
        <end position="426"/>
    </location>
</feature>
<feature type="modified residue" description="N6-(pyridoxal phosphate)lysine" evidence="1">
    <location>
        <position position="265"/>
    </location>
</feature>
<organism>
    <name type="scientific">Escherichia coli (strain UTI89 / UPEC)</name>
    <dbReference type="NCBI Taxonomy" id="364106"/>
    <lineage>
        <taxon>Bacteria</taxon>
        <taxon>Pseudomonadati</taxon>
        <taxon>Pseudomonadota</taxon>
        <taxon>Gammaproteobacteria</taxon>
        <taxon>Enterobacterales</taxon>
        <taxon>Enterobacteriaceae</taxon>
        <taxon>Escherichia</taxon>
    </lineage>
</organism>
<sequence length="426" mass="45413">MSKSENLYSAARELIPGGVNSPVRAFTGVGGTPLFIEKADGAYLYDVDGKAYIDYVGSWGPMVLGHNHPAIRNAVIEAAERGLSFGAPTEMEVKMAQLVTELVPTMDMVRMVNSGTEATMSAIRLARGFTGRDKIIKFEGCYHGHADCLLVKAGSGALTLGQPNSPGVPADFAKHTLTCTYNDLASVRAAFEQYPQEIACIIVEPVAGNMNCVPPLPEFLPGLRALCDEFGALLIIDEVMTGFRVALAGAQDYYGVEPDLTCLGKIIGGGMPVGAFGGRRDVMDALAPTGPVYQAGTLSGNPIAMAAGFACLNEVAQPGVHETLDELTTRLAEGLREAAEEAGIPLVVNHVGGMFGIFFTDAESVTCYQDVMACDVERFKRFFHMMLDEGVYLAPSAFEAGFMSVAHSMEDINNTIDAARRVFAKL</sequence>
<dbReference type="EC" id="5.4.3.8" evidence="1"/>
<dbReference type="EMBL" id="CP000243">
    <property type="protein sequence ID" value="ABE05680.1"/>
    <property type="molecule type" value="Genomic_DNA"/>
</dbReference>
<dbReference type="RefSeq" id="WP_000045295.1">
    <property type="nucleotide sequence ID" value="NZ_CP064825.1"/>
</dbReference>
<dbReference type="SMR" id="Q1RG34"/>
<dbReference type="KEGG" id="eci:UTI89_C0170"/>
<dbReference type="HOGENOM" id="CLU_016922_1_5_6"/>
<dbReference type="UniPathway" id="UPA00251">
    <property type="reaction ID" value="UER00317"/>
</dbReference>
<dbReference type="Proteomes" id="UP000001952">
    <property type="component" value="Chromosome"/>
</dbReference>
<dbReference type="GO" id="GO:0005737">
    <property type="term" value="C:cytoplasm"/>
    <property type="evidence" value="ECO:0007669"/>
    <property type="project" value="UniProtKB-SubCell"/>
</dbReference>
<dbReference type="GO" id="GO:0042286">
    <property type="term" value="F:glutamate-1-semialdehyde 2,1-aminomutase activity"/>
    <property type="evidence" value="ECO:0007669"/>
    <property type="project" value="UniProtKB-UniRule"/>
</dbReference>
<dbReference type="GO" id="GO:0030170">
    <property type="term" value="F:pyridoxal phosphate binding"/>
    <property type="evidence" value="ECO:0007669"/>
    <property type="project" value="InterPro"/>
</dbReference>
<dbReference type="GO" id="GO:0008483">
    <property type="term" value="F:transaminase activity"/>
    <property type="evidence" value="ECO:0007669"/>
    <property type="project" value="InterPro"/>
</dbReference>
<dbReference type="GO" id="GO:0006782">
    <property type="term" value="P:protoporphyrinogen IX biosynthetic process"/>
    <property type="evidence" value="ECO:0007669"/>
    <property type="project" value="UniProtKB-UniRule"/>
</dbReference>
<dbReference type="CDD" id="cd00610">
    <property type="entry name" value="OAT_like"/>
    <property type="match status" value="1"/>
</dbReference>
<dbReference type="FunFam" id="3.40.640.10:FF:000021">
    <property type="entry name" value="Glutamate-1-semialdehyde 2,1-aminomutase"/>
    <property type="match status" value="1"/>
</dbReference>
<dbReference type="FunFam" id="3.90.1150.10:FF:000012">
    <property type="entry name" value="Glutamate-1-semialdehyde 2,1-aminomutase"/>
    <property type="match status" value="1"/>
</dbReference>
<dbReference type="Gene3D" id="3.90.1150.10">
    <property type="entry name" value="Aspartate Aminotransferase, domain 1"/>
    <property type="match status" value="1"/>
</dbReference>
<dbReference type="Gene3D" id="3.40.640.10">
    <property type="entry name" value="Type I PLP-dependent aspartate aminotransferase-like (Major domain)"/>
    <property type="match status" value="1"/>
</dbReference>
<dbReference type="HAMAP" id="MF_00375">
    <property type="entry name" value="HemL_aminotrans_3"/>
    <property type="match status" value="1"/>
</dbReference>
<dbReference type="InterPro" id="IPR004639">
    <property type="entry name" value="4pyrrol_synth_GluAld_NH2Trfase"/>
</dbReference>
<dbReference type="InterPro" id="IPR005814">
    <property type="entry name" value="Aminotrans_3"/>
</dbReference>
<dbReference type="InterPro" id="IPR049704">
    <property type="entry name" value="Aminotrans_3_PPA_site"/>
</dbReference>
<dbReference type="InterPro" id="IPR015424">
    <property type="entry name" value="PyrdxlP-dep_Trfase"/>
</dbReference>
<dbReference type="InterPro" id="IPR015421">
    <property type="entry name" value="PyrdxlP-dep_Trfase_major"/>
</dbReference>
<dbReference type="InterPro" id="IPR015422">
    <property type="entry name" value="PyrdxlP-dep_Trfase_small"/>
</dbReference>
<dbReference type="NCBIfam" id="TIGR00713">
    <property type="entry name" value="hemL"/>
    <property type="match status" value="1"/>
</dbReference>
<dbReference type="NCBIfam" id="NF000818">
    <property type="entry name" value="PRK00062.1"/>
    <property type="match status" value="1"/>
</dbReference>
<dbReference type="PANTHER" id="PTHR43713">
    <property type="entry name" value="GLUTAMATE-1-SEMIALDEHYDE 2,1-AMINOMUTASE"/>
    <property type="match status" value="1"/>
</dbReference>
<dbReference type="PANTHER" id="PTHR43713:SF3">
    <property type="entry name" value="GLUTAMATE-1-SEMIALDEHYDE 2,1-AMINOMUTASE 1, CHLOROPLASTIC-RELATED"/>
    <property type="match status" value="1"/>
</dbReference>
<dbReference type="Pfam" id="PF00202">
    <property type="entry name" value="Aminotran_3"/>
    <property type="match status" value="1"/>
</dbReference>
<dbReference type="SUPFAM" id="SSF53383">
    <property type="entry name" value="PLP-dependent transferases"/>
    <property type="match status" value="1"/>
</dbReference>
<dbReference type="PROSITE" id="PS00600">
    <property type="entry name" value="AA_TRANSFER_CLASS_3"/>
    <property type="match status" value="1"/>
</dbReference>
<protein>
    <recommendedName>
        <fullName evidence="1">Glutamate-1-semialdehyde 2,1-aminomutase</fullName>
        <shortName evidence="1">GSA</shortName>
        <ecNumber evidence="1">5.4.3.8</ecNumber>
    </recommendedName>
    <alternativeName>
        <fullName evidence="1">Glutamate-1-semialdehyde aminotransferase</fullName>
        <shortName evidence="1">GSA-AT</shortName>
    </alternativeName>
</protein>
<gene>
    <name evidence="1" type="primary">hemL</name>
    <name type="ordered locus">UTI89_C0170</name>
</gene>